<dbReference type="EC" id="2.1.1.206" evidence="1"/>
<dbReference type="EMBL" id="CP000780">
    <property type="protein sequence ID" value="ABS55795.1"/>
    <property type="molecule type" value="Genomic_DNA"/>
</dbReference>
<dbReference type="RefSeq" id="WP_012106827.1">
    <property type="nucleotide sequence ID" value="NC_009712.1"/>
</dbReference>
<dbReference type="SMR" id="A7I7T4"/>
<dbReference type="STRING" id="456442.Mboo_1277"/>
<dbReference type="GeneID" id="5410297"/>
<dbReference type="KEGG" id="mbn:Mboo_1277"/>
<dbReference type="eggNOG" id="arCOG01857">
    <property type="taxonomic scope" value="Archaea"/>
</dbReference>
<dbReference type="HOGENOM" id="CLU_123709_0_0_2"/>
<dbReference type="OrthoDB" id="14397at2157"/>
<dbReference type="Proteomes" id="UP000002408">
    <property type="component" value="Chromosome"/>
</dbReference>
<dbReference type="GO" id="GO:0005737">
    <property type="term" value="C:cytoplasm"/>
    <property type="evidence" value="ECO:0007669"/>
    <property type="project" value="UniProtKB-SubCell"/>
</dbReference>
<dbReference type="GO" id="GO:0106059">
    <property type="term" value="F:tRNA (cytidine(56)-2'-O)-methyltransferase activity"/>
    <property type="evidence" value="ECO:0007669"/>
    <property type="project" value="UniProtKB-EC"/>
</dbReference>
<dbReference type="GO" id="GO:0002128">
    <property type="term" value="P:tRNA nucleoside ribose methylation"/>
    <property type="evidence" value="ECO:0007669"/>
    <property type="project" value="UniProtKB-UniRule"/>
</dbReference>
<dbReference type="CDD" id="cd18083">
    <property type="entry name" value="aTrm56-like"/>
    <property type="match status" value="1"/>
</dbReference>
<dbReference type="Gene3D" id="3.40.1280.10">
    <property type="match status" value="1"/>
</dbReference>
<dbReference type="HAMAP" id="MF_00077">
    <property type="entry name" value="tRNA_methyltr_aTrm56"/>
    <property type="match status" value="1"/>
</dbReference>
<dbReference type="InterPro" id="IPR029028">
    <property type="entry name" value="Alpha/beta_knot_MTases"/>
</dbReference>
<dbReference type="InterPro" id="IPR029026">
    <property type="entry name" value="tRNA_m1G_MTases_N"/>
</dbReference>
<dbReference type="InterPro" id="IPR002845">
    <property type="entry name" value="tRNA_mtfrase_aTrm56"/>
</dbReference>
<dbReference type="NCBIfam" id="NF003048">
    <property type="entry name" value="PRK03958.1"/>
    <property type="match status" value="1"/>
</dbReference>
<dbReference type="PANTHER" id="PTHR42197">
    <property type="entry name" value="TRNA (CYTIDINE(56)-2'-O)-METHYLTRANSFERASE"/>
    <property type="match status" value="1"/>
</dbReference>
<dbReference type="PANTHER" id="PTHR42197:SF1">
    <property type="entry name" value="TRNA (CYTIDINE(56)-2'-O)-METHYLTRANSFERASE"/>
    <property type="match status" value="1"/>
</dbReference>
<dbReference type="Pfam" id="PF01994">
    <property type="entry name" value="Trm56"/>
    <property type="match status" value="1"/>
</dbReference>
<dbReference type="PIRSF" id="PIRSF016123">
    <property type="entry name" value="UCP016123"/>
    <property type="match status" value="1"/>
</dbReference>
<dbReference type="SUPFAM" id="SSF75217">
    <property type="entry name" value="alpha/beta knot"/>
    <property type="match status" value="1"/>
</dbReference>
<comment type="function">
    <text evidence="1">Specifically catalyzes the AdoMet-dependent 2'-O-ribose methylation of cytidine at position 56 in tRNAs.</text>
</comment>
<comment type="catalytic activity">
    <reaction evidence="1">
        <text>cytidine(56) in tRNA + S-adenosyl-L-methionine = 2'-O-methylcytidine(56) in tRNA + S-adenosyl-L-homocysteine + H(+)</text>
        <dbReference type="Rhea" id="RHEA:42968"/>
        <dbReference type="Rhea" id="RHEA-COMP:10308"/>
        <dbReference type="Rhea" id="RHEA-COMP:10309"/>
        <dbReference type="ChEBI" id="CHEBI:15378"/>
        <dbReference type="ChEBI" id="CHEBI:57856"/>
        <dbReference type="ChEBI" id="CHEBI:59789"/>
        <dbReference type="ChEBI" id="CHEBI:74495"/>
        <dbReference type="ChEBI" id="CHEBI:82748"/>
        <dbReference type="EC" id="2.1.1.206"/>
    </reaction>
</comment>
<comment type="subunit">
    <text evidence="1">Homodimer.</text>
</comment>
<comment type="subcellular location">
    <subcellularLocation>
        <location evidence="1">Cytoplasm</location>
    </subcellularLocation>
</comment>
<comment type="similarity">
    <text evidence="1">Belongs to the aTrm56 family.</text>
</comment>
<keyword id="KW-0963">Cytoplasm</keyword>
<keyword id="KW-0489">Methyltransferase</keyword>
<keyword id="KW-1185">Reference proteome</keyword>
<keyword id="KW-0949">S-adenosyl-L-methionine</keyword>
<keyword id="KW-0808">Transferase</keyword>
<keyword id="KW-0819">tRNA processing</keyword>
<sequence length="176" mass="19377">MAGKEVVILRIGHRPERDQRVTTHVALTGRALGACGMYLAASDKGVVQSVLDVAERWGGQFFCEDNIRWRTCIKDWKAAGGKVAHLTMYGINLPDIIEEIRPCEKLLVVVGAEKVPGEMYGLADYNVAVTGQPHSEIASLALFLDRYHDGREFAGEFPGAKIRIIPSRAGKQTEEL</sequence>
<proteinExistence type="inferred from homology"/>
<reference key="1">
    <citation type="journal article" date="2015" name="Microbiology">
        <title>Genome of Methanoregula boonei 6A8 reveals adaptations to oligotrophic peatland environments.</title>
        <authorList>
            <person name="Braeuer S."/>
            <person name="Cadillo-Quiroz H."/>
            <person name="Kyrpides N."/>
            <person name="Woyke T."/>
            <person name="Goodwin L."/>
            <person name="Detter C."/>
            <person name="Podell S."/>
            <person name="Yavitt J.B."/>
            <person name="Zinder S.H."/>
        </authorList>
    </citation>
    <scope>NUCLEOTIDE SEQUENCE [LARGE SCALE GENOMIC DNA]</scope>
    <source>
        <strain>DSM 21154 / JCM 14090 / 6A8</strain>
    </source>
</reference>
<gene>
    <name type="ordered locus">Mboo_1277</name>
</gene>
<name>TRM56_METB6</name>
<evidence type="ECO:0000255" key="1">
    <source>
        <dbReference type="HAMAP-Rule" id="MF_00077"/>
    </source>
</evidence>
<protein>
    <recommendedName>
        <fullName evidence="1">tRNA (cytidine(56)-2'-O)-methyltransferase</fullName>
        <ecNumber evidence="1">2.1.1.206</ecNumber>
    </recommendedName>
    <alternativeName>
        <fullName evidence="1">tRNA ribose 2'-O-methyltransferase aTrm56</fullName>
    </alternativeName>
</protein>
<accession>A7I7T4</accession>
<organism>
    <name type="scientific">Methanoregula boonei (strain DSM 21154 / JCM 14090 / 6A8)</name>
    <dbReference type="NCBI Taxonomy" id="456442"/>
    <lineage>
        <taxon>Archaea</taxon>
        <taxon>Methanobacteriati</taxon>
        <taxon>Methanobacteriota</taxon>
        <taxon>Stenosarchaea group</taxon>
        <taxon>Methanomicrobia</taxon>
        <taxon>Methanomicrobiales</taxon>
        <taxon>Methanoregulaceae</taxon>
        <taxon>Methanoregula</taxon>
    </lineage>
</organism>
<feature type="chain" id="PRO_0000365313" description="tRNA (cytidine(56)-2'-O)-methyltransferase">
    <location>
        <begin position="1"/>
        <end position="176"/>
    </location>
</feature>
<feature type="binding site" evidence="1">
    <location>
        <position position="86"/>
    </location>
    <ligand>
        <name>S-adenosyl-L-methionine</name>
        <dbReference type="ChEBI" id="CHEBI:59789"/>
    </ligand>
</feature>
<feature type="binding site" evidence="1">
    <location>
        <begin position="111"/>
        <end position="115"/>
    </location>
    <ligand>
        <name>S-adenosyl-L-methionine</name>
        <dbReference type="ChEBI" id="CHEBI:59789"/>
    </ligand>
</feature>